<keyword id="KW-0067">ATP-binding</keyword>
<keyword id="KW-0963">Cytoplasm</keyword>
<keyword id="KW-0436">Ligase</keyword>
<keyword id="KW-0460">Magnesium</keyword>
<keyword id="KW-0479">Metal-binding</keyword>
<keyword id="KW-0547">Nucleotide-binding</keyword>
<keyword id="KW-0658">Purine biosynthesis</keyword>
<keyword id="KW-1185">Reference proteome</keyword>
<dbReference type="EC" id="6.3.5.3" evidence="1"/>
<dbReference type="EMBL" id="CP000095">
    <property type="protein sequence ID" value="AAZ58819.1"/>
    <property type="molecule type" value="Genomic_DNA"/>
</dbReference>
<dbReference type="RefSeq" id="WP_011293963.1">
    <property type="nucleotide sequence ID" value="NC_007335.2"/>
</dbReference>
<dbReference type="SMR" id="Q46I59"/>
<dbReference type="STRING" id="59920.PMN2A_1330"/>
<dbReference type="KEGG" id="pmn:PMN2A_1330"/>
<dbReference type="HOGENOM" id="CLU_003100_0_1_3"/>
<dbReference type="OrthoDB" id="9804441at2"/>
<dbReference type="PhylomeDB" id="Q46I59"/>
<dbReference type="UniPathway" id="UPA00074">
    <property type="reaction ID" value="UER00128"/>
</dbReference>
<dbReference type="Proteomes" id="UP000002535">
    <property type="component" value="Chromosome"/>
</dbReference>
<dbReference type="GO" id="GO:0005737">
    <property type="term" value="C:cytoplasm"/>
    <property type="evidence" value="ECO:0007669"/>
    <property type="project" value="UniProtKB-SubCell"/>
</dbReference>
<dbReference type="GO" id="GO:0005524">
    <property type="term" value="F:ATP binding"/>
    <property type="evidence" value="ECO:0007669"/>
    <property type="project" value="UniProtKB-UniRule"/>
</dbReference>
<dbReference type="GO" id="GO:0000287">
    <property type="term" value="F:magnesium ion binding"/>
    <property type="evidence" value="ECO:0007669"/>
    <property type="project" value="UniProtKB-UniRule"/>
</dbReference>
<dbReference type="GO" id="GO:0004642">
    <property type="term" value="F:phosphoribosylformylglycinamidine synthase activity"/>
    <property type="evidence" value="ECO:0007669"/>
    <property type="project" value="UniProtKB-UniRule"/>
</dbReference>
<dbReference type="GO" id="GO:0006189">
    <property type="term" value="P:'de novo' IMP biosynthetic process"/>
    <property type="evidence" value="ECO:0007669"/>
    <property type="project" value="UniProtKB-UniRule"/>
</dbReference>
<dbReference type="CDD" id="cd02203">
    <property type="entry name" value="PurL_repeat1"/>
    <property type="match status" value="1"/>
</dbReference>
<dbReference type="CDD" id="cd02204">
    <property type="entry name" value="PurL_repeat2"/>
    <property type="match status" value="1"/>
</dbReference>
<dbReference type="FunFam" id="3.30.1330.10:FF:000004">
    <property type="entry name" value="Phosphoribosylformylglycinamidine synthase subunit PurL"/>
    <property type="match status" value="1"/>
</dbReference>
<dbReference type="Gene3D" id="3.90.650.10">
    <property type="entry name" value="PurM-like C-terminal domain"/>
    <property type="match status" value="2"/>
</dbReference>
<dbReference type="Gene3D" id="3.30.1330.10">
    <property type="entry name" value="PurM-like, N-terminal domain"/>
    <property type="match status" value="2"/>
</dbReference>
<dbReference type="HAMAP" id="MF_00420">
    <property type="entry name" value="PurL_2"/>
    <property type="match status" value="1"/>
</dbReference>
<dbReference type="InterPro" id="IPR010074">
    <property type="entry name" value="PRibForGlyAmidine_synth_PurL"/>
</dbReference>
<dbReference type="InterPro" id="IPR041609">
    <property type="entry name" value="PurL_linker"/>
</dbReference>
<dbReference type="InterPro" id="IPR010918">
    <property type="entry name" value="PurM-like_C_dom"/>
</dbReference>
<dbReference type="InterPro" id="IPR036676">
    <property type="entry name" value="PurM-like_C_sf"/>
</dbReference>
<dbReference type="InterPro" id="IPR016188">
    <property type="entry name" value="PurM-like_N"/>
</dbReference>
<dbReference type="InterPro" id="IPR036921">
    <property type="entry name" value="PurM-like_N_sf"/>
</dbReference>
<dbReference type="NCBIfam" id="TIGR01736">
    <property type="entry name" value="FGAM_synth_II"/>
    <property type="match status" value="1"/>
</dbReference>
<dbReference type="NCBIfam" id="NF002290">
    <property type="entry name" value="PRK01213.1"/>
    <property type="match status" value="1"/>
</dbReference>
<dbReference type="PANTHER" id="PTHR43555">
    <property type="entry name" value="PHOSPHORIBOSYLFORMYLGLYCINAMIDINE SYNTHASE SUBUNIT PURL"/>
    <property type="match status" value="1"/>
</dbReference>
<dbReference type="PANTHER" id="PTHR43555:SF1">
    <property type="entry name" value="PHOSPHORIBOSYLFORMYLGLYCINAMIDINE SYNTHASE SUBUNIT PURL"/>
    <property type="match status" value="1"/>
</dbReference>
<dbReference type="Pfam" id="PF00586">
    <property type="entry name" value="AIRS"/>
    <property type="match status" value="2"/>
</dbReference>
<dbReference type="Pfam" id="PF02769">
    <property type="entry name" value="AIRS_C"/>
    <property type="match status" value="2"/>
</dbReference>
<dbReference type="Pfam" id="PF18072">
    <property type="entry name" value="FGAR-AT_linker"/>
    <property type="match status" value="1"/>
</dbReference>
<dbReference type="PIRSF" id="PIRSF001587">
    <property type="entry name" value="FGAM_synthase_II"/>
    <property type="match status" value="1"/>
</dbReference>
<dbReference type="SUPFAM" id="SSF56042">
    <property type="entry name" value="PurM C-terminal domain-like"/>
    <property type="match status" value="2"/>
</dbReference>
<dbReference type="SUPFAM" id="SSF55326">
    <property type="entry name" value="PurM N-terminal domain-like"/>
    <property type="match status" value="2"/>
</dbReference>
<proteinExistence type="inferred from homology"/>
<evidence type="ECO:0000255" key="1">
    <source>
        <dbReference type="HAMAP-Rule" id="MF_00420"/>
    </source>
</evidence>
<organism>
    <name type="scientific">Prochlorococcus marinus (strain NATL2A)</name>
    <dbReference type="NCBI Taxonomy" id="59920"/>
    <lineage>
        <taxon>Bacteria</taxon>
        <taxon>Bacillati</taxon>
        <taxon>Cyanobacteriota</taxon>
        <taxon>Cyanophyceae</taxon>
        <taxon>Synechococcales</taxon>
        <taxon>Prochlorococcaceae</taxon>
        <taxon>Prochlorococcus</taxon>
    </lineage>
</organism>
<gene>
    <name evidence="1" type="primary">purL</name>
    <name type="ordered locus">PMN2A_1330</name>
</gene>
<sequence>MTVSFENKDFNQFINSSKFLVEYDVTSALEQEGLKQSDYAEICRRLNRAPNRNELGMFGVMWSEHCCYRNSRPLLKNFPTTGSRILVGPGENAGVVDIGFGQRLVFKIESHNHPSAVEPFQGAATGVGGILRDIFTMGARPIALLNALRFGPLDDEKNISLLEGVVAGISHYGNCVGVPTIGGEVGFDSSYSGNPLVNAMALGLMETEEIVCSGASGIGFPVLYVGNTTGRDGMGGASFASSELSKTSIDDRPAVQVGDPFLEKGLIEACLEAFKTGYVIAAQDMGAAGLTCSCSEMASKGEVGIELNLDLVPAREKGMTAYEFLLSESQERMLFVVKPGSEEELRELFIRWGLYVEVVGKVLKEKVVRVIHKGEVVANLPASALADDTPIEEHLLINSTPEYLQEHWKWTEDLLPKTLDDGIINIKNNLFISWNNVLLELLSIPSIASKNWIYKQYDFQVQSNTVVSPGEADAAVIRIRSQNDFSTKPKKDRGIASVVDCNDRWVYLDPQRGSMSAVAEAARNLSAVGAEPIAITNNLNFSSPDKAVGFWQLSMSCEGITKACLALNTPVTGGNVSLYNDTKLPNNTVIPIHPTPVIGMVGLIEDINKICKKSWVKAEDQIWMIGLPLENNINQDERISLSASSFLEYIHGLKTGRPPEIDLNLEKQVHAFLREVIKQGIVNSAHDLGDGGLTVAIADCCISSGYGANIILPPSQSRLDRLLFAEGGARVLVSCSTDQSVELKKYYKNISLQGSILFSISHLGNVNNQKKLLVSQSNNTIIDVNILDLKDTYKDAIHKKITK</sequence>
<reference key="1">
    <citation type="journal article" date="2007" name="PLoS Genet.">
        <title>Patterns and implications of gene gain and loss in the evolution of Prochlorococcus.</title>
        <authorList>
            <person name="Kettler G.C."/>
            <person name="Martiny A.C."/>
            <person name="Huang K."/>
            <person name="Zucker J."/>
            <person name="Coleman M.L."/>
            <person name="Rodrigue S."/>
            <person name="Chen F."/>
            <person name="Lapidus A."/>
            <person name="Ferriera S."/>
            <person name="Johnson J."/>
            <person name="Steglich C."/>
            <person name="Church G.M."/>
            <person name="Richardson P."/>
            <person name="Chisholm S.W."/>
        </authorList>
    </citation>
    <scope>NUCLEOTIDE SEQUENCE [LARGE SCALE GENOMIC DNA]</scope>
    <source>
        <strain>NATL2A</strain>
    </source>
</reference>
<accession>Q46I59</accession>
<comment type="function">
    <text evidence="1">Part of the phosphoribosylformylglycinamidine synthase complex involved in the purines biosynthetic pathway. Catalyzes the ATP-dependent conversion of formylglycinamide ribonucleotide (FGAR) and glutamine to yield formylglycinamidine ribonucleotide (FGAM) and glutamate. The FGAM synthase complex is composed of three subunits. PurQ produces an ammonia molecule by converting glutamine to glutamate. PurL transfers the ammonia molecule to FGAR to form FGAM in an ATP-dependent manner. PurS interacts with PurQ and PurL and is thought to assist in the transfer of the ammonia molecule from PurQ to PurL.</text>
</comment>
<comment type="catalytic activity">
    <reaction evidence="1">
        <text>N(2)-formyl-N(1)-(5-phospho-beta-D-ribosyl)glycinamide + L-glutamine + ATP + H2O = 2-formamido-N(1)-(5-O-phospho-beta-D-ribosyl)acetamidine + L-glutamate + ADP + phosphate + H(+)</text>
        <dbReference type="Rhea" id="RHEA:17129"/>
        <dbReference type="ChEBI" id="CHEBI:15377"/>
        <dbReference type="ChEBI" id="CHEBI:15378"/>
        <dbReference type="ChEBI" id="CHEBI:29985"/>
        <dbReference type="ChEBI" id="CHEBI:30616"/>
        <dbReference type="ChEBI" id="CHEBI:43474"/>
        <dbReference type="ChEBI" id="CHEBI:58359"/>
        <dbReference type="ChEBI" id="CHEBI:147286"/>
        <dbReference type="ChEBI" id="CHEBI:147287"/>
        <dbReference type="ChEBI" id="CHEBI:456216"/>
        <dbReference type="EC" id="6.3.5.3"/>
    </reaction>
</comment>
<comment type="pathway">
    <text evidence="1">Purine metabolism; IMP biosynthesis via de novo pathway; 5-amino-1-(5-phospho-D-ribosyl)imidazole from N(2)-formyl-N(1)-(5-phospho-D-ribosyl)glycinamide: step 1/2.</text>
</comment>
<comment type="subunit">
    <text evidence="1">Monomer. Part of the FGAM synthase complex composed of 1 PurL, 1 PurQ and 2 PurS subunits.</text>
</comment>
<comment type="subcellular location">
    <subcellularLocation>
        <location evidence="1">Cytoplasm</location>
    </subcellularLocation>
</comment>
<comment type="similarity">
    <text evidence="1">Belongs to the FGAMS family.</text>
</comment>
<feature type="chain" id="PRO_0000236661" description="Phosphoribosylformylglycinamidine synthase subunit PurL">
    <location>
        <begin position="1"/>
        <end position="803"/>
    </location>
</feature>
<feature type="active site" evidence="1">
    <location>
        <position position="65"/>
    </location>
</feature>
<feature type="active site" description="Proton acceptor" evidence="1">
    <location>
        <position position="111"/>
    </location>
</feature>
<feature type="binding site" evidence="1">
    <location>
        <position position="68"/>
    </location>
    <ligand>
        <name>ATP</name>
        <dbReference type="ChEBI" id="CHEBI:30616"/>
    </ligand>
</feature>
<feature type="binding site" evidence="1">
    <location>
        <position position="107"/>
    </location>
    <ligand>
        <name>ATP</name>
        <dbReference type="ChEBI" id="CHEBI:30616"/>
    </ligand>
</feature>
<feature type="binding site" evidence="1">
    <location>
        <position position="109"/>
    </location>
    <ligand>
        <name>Mg(2+)</name>
        <dbReference type="ChEBI" id="CHEBI:18420"/>
        <label>1</label>
    </ligand>
</feature>
<feature type="binding site" evidence="1">
    <location>
        <begin position="110"/>
        <end position="113"/>
    </location>
    <ligand>
        <name>substrate</name>
    </ligand>
</feature>
<feature type="binding site" evidence="1">
    <location>
        <position position="132"/>
    </location>
    <ligand>
        <name>substrate</name>
    </ligand>
</feature>
<feature type="binding site" evidence="1">
    <location>
        <position position="133"/>
    </location>
    <ligand>
        <name>Mg(2+)</name>
        <dbReference type="ChEBI" id="CHEBI:18420"/>
        <label>2</label>
    </ligand>
</feature>
<feature type="binding site" evidence="1">
    <location>
        <position position="256"/>
    </location>
    <ligand>
        <name>substrate</name>
    </ligand>
</feature>
<feature type="binding site" evidence="1">
    <location>
        <position position="284"/>
    </location>
    <ligand>
        <name>Mg(2+)</name>
        <dbReference type="ChEBI" id="CHEBI:18420"/>
        <label>2</label>
    </ligand>
</feature>
<feature type="binding site" evidence="1">
    <location>
        <begin position="328"/>
        <end position="330"/>
    </location>
    <ligand>
        <name>substrate</name>
    </ligand>
</feature>
<feature type="binding site" evidence="1">
    <location>
        <position position="537"/>
    </location>
    <ligand>
        <name>ATP</name>
        <dbReference type="ChEBI" id="CHEBI:30616"/>
    </ligand>
</feature>
<feature type="binding site" evidence="1">
    <location>
        <position position="574"/>
    </location>
    <ligand>
        <name>ATP</name>
        <dbReference type="ChEBI" id="CHEBI:30616"/>
    </ligand>
</feature>
<feature type="binding site" evidence="1">
    <location>
        <position position="575"/>
    </location>
    <ligand>
        <name>Mg(2+)</name>
        <dbReference type="ChEBI" id="CHEBI:18420"/>
        <label>1</label>
    </ligand>
</feature>
<feature type="binding site" evidence="1">
    <location>
        <position position="577"/>
    </location>
    <ligand>
        <name>substrate</name>
    </ligand>
</feature>
<name>PURL_PROMT</name>
<protein>
    <recommendedName>
        <fullName evidence="1">Phosphoribosylformylglycinamidine synthase subunit PurL</fullName>
        <shortName evidence="1">FGAM synthase</shortName>
        <ecNumber evidence="1">6.3.5.3</ecNumber>
    </recommendedName>
    <alternativeName>
        <fullName evidence="1">Formylglycinamide ribonucleotide amidotransferase subunit II</fullName>
        <shortName evidence="1">FGAR amidotransferase II</shortName>
        <shortName evidence="1">FGAR-AT II</shortName>
    </alternativeName>
    <alternativeName>
        <fullName evidence="1">Glutamine amidotransferase PurL</fullName>
    </alternativeName>
    <alternativeName>
        <fullName evidence="1">Phosphoribosylformylglycinamidine synthase subunit II</fullName>
    </alternativeName>
</protein>